<protein>
    <recommendedName>
        <fullName evidence="1">Cell division protein SepF</fullName>
    </recommendedName>
</protein>
<sequence length="196" mass="21938">MAFKDWMNNLRDYFVEDDEEFNEPTRPVQESRPTVASTPKPKVEERKVQADYQSRRPAQTTPKPQTQTAAPKRSASTFSKPMPEKIVQQQTVSQAQSLAATVSTIAIKEPRAYADIMESARIVKNGECVLVNFKFMGDAQARRSIDFMTGVVFTLDGDIQNVGGQIFLMTPANITVDAAKEMSILAGQNFESYDIY</sequence>
<feature type="chain" id="PRO_0000334027" description="Cell division protein SepF">
    <location>
        <begin position="1"/>
        <end position="196"/>
    </location>
</feature>
<feature type="region of interest" description="Disordered" evidence="2">
    <location>
        <begin position="15"/>
        <end position="80"/>
    </location>
</feature>
<feature type="compositionally biased region" description="Low complexity" evidence="2">
    <location>
        <begin position="57"/>
        <end position="72"/>
    </location>
</feature>
<dbReference type="EMBL" id="Y15422">
    <property type="protein sequence ID" value="CAA75618.1"/>
    <property type="molecule type" value="Genomic_DNA"/>
</dbReference>
<dbReference type="EMBL" id="AM406671">
    <property type="protein sequence ID" value="CAL98625.1"/>
    <property type="molecule type" value="Genomic_DNA"/>
</dbReference>
<dbReference type="RefSeq" id="WP_011835772.1">
    <property type="nucleotide sequence ID" value="NC_009004.1"/>
</dbReference>
<dbReference type="SMR" id="Q9ZAI9"/>
<dbReference type="STRING" id="416870.llmg_2058"/>
<dbReference type="KEGG" id="llm:llmg_2058"/>
<dbReference type="eggNOG" id="COG1799">
    <property type="taxonomic scope" value="Bacteria"/>
</dbReference>
<dbReference type="HOGENOM" id="CLU_078499_2_0_9"/>
<dbReference type="OrthoDB" id="9815206at2"/>
<dbReference type="PhylomeDB" id="Q9ZAI9"/>
<dbReference type="Proteomes" id="UP000000364">
    <property type="component" value="Chromosome"/>
</dbReference>
<dbReference type="GO" id="GO:0005737">
    <property type="term" value="C:cytoplasm"/>
    <property type="evidence" value="ECO:0007669"/>
    <property type="project" value="UniProtKB-SubCell"/>
</dbReference>
<dbReference type="GO" id="GO:0000917">
    <property type="term" value="P:division septum assembly"/>
    <property type="evidence" value="ECO:0007669"/>
    <property type="project" value="UniProtKB-KW"/>
</dbReference>
<dbReference type="GO" id="GO:0043093">
    <property type="term" value="P:FtsZ-dependent cytokinesis"/>
    <property type="evidence" value="ECO:0007669"/>
    <property type="project" value="UniProtKB-UniRule"/>
</dbReference>
<dbReference type="Gene3D" id="3.30.110.150">
    <property type="entry name" value="SepF-like protein"/>
    <property type="match status" value="1"/>
</dbReference>
<dbReference type="HAMAP" id="MF_01197">
    <property type="entry name" value="SepF"/>
    <property type="match status" value="1"/>
</dbReference>
<dbReference type="InterPro" id="IPR023052">
    <property type="entry name" value="Cell_div_SepF"/>
</dbReference>
<dbReference type="InterPro" id="IPR007561">
    <property type="entry name" value="Cell_div_SepF/SepF-rel"/>
</dbReference>
<dbReference type="InterPro" id="IPR038594">
    <property type="entry name" value="SepF-like_sf"/>
</dbReference>
<dbReference type="PANTHER" id="PTHR35798">
    <property type="entry name" value="CELL DIVISION PROTEIN SEPF"/>
    <property type="match status" value="1"/>
</dbReference>
<dbReference type="PANTHER" id="PTHR35798:SF1">
    <property type="entry name" value="CELL DIVISION PROTEIN SEPF"/>
    <property type="match status" value="1"/>
</dbReference>
<dbReference type="Pfam" id="PF04472">
    <property type="entry name" value="SepF"/>
    <property type="match status" value="1"/>
</dbReference>
<organism>
    <name type="scientific">Lactococcus lactis subsp. cremoris (strain MG1363)</name>
    <dbReference type="NCBI Taxonomy" id="416870"/>
    <lineage>
        <taxon>Bacteria</taxon>
        <taxon>Bacillati</taxon>
        <taxon>Bacillota</taxon>
        <taxon>Bacilli</taxon>
        <taxon>Lactobacillales</taxon>
        <taxon>Streptococcaceae</taxon>
        <taxon>Lactococcus</taxon>
        <taxon>Lactococcus cremoris subsp. cremoris</taxon>
    </lineage>
</organism>
<gene>
    <name evidence="1" type="primary">sepF</name>
    <name type="ordered locus">llmg_2058</name>
</gene>
<accession>Q9ZAI9</accession>
<accession>A2RMT9</accession>
<keyword id="KW-0131">Cell cycle</keyword>
<keyword id="KW-0132">Cell division</keyword>
<keyword id="KW-0963">Cytoplasm</keyword>
<keyword id="KW-0717">Septation</keyword>
<name>SEPF_LACLM</name>
<proteinExistence type="inferred from homology"/>
<evidence type="ECO:0000255" key="1">
    <source>
        <dbReference type="HAMAP-Rule" id="MF_01197"/>
    </source>
</evidence>
<evidence type="ECO:0000256" key="2">
    <source>
        <dbReference type="SAM" id="MobiDB-lite"/>
    </source>
</evidence>
<reference key="1">
    <citation type="submission" date="1997-11" db="EMBL/GenBank/DDBJ databases">
        <title>Cloning and characterization of a cell division operon in Lactococcus lactis strain MG1363.</title>
        <authorList>
            <person name="Sorensen K.I."/>
            <person name="Vogensen F.K."/>
            <person name="Hammer K."/>
        </authorList>
    </citation>
    <scope>NUCLEOTIDE SEQUENCE [GENOMIC DNA]</scope>
</reference>
<reference key="2">
    <citation type="journal article" date="2007" name="J. Bacteriol.">
        <title>The complete genome sequence of the lactic acid bacterial paradigm Lactococcus lactis subsp. cremoris MG1363.</title>
        <authorList>
            <person name="Wegmann U."/>
            <person name="O'Connell-Motherway M."/>
            <person name="Zomer A."/>
            <person name="Buist G."/>
            <person name="Shearman C."/>
            <person name="Canchaya C."/>
            <person name="Ventura M."/>
            <person name="Goesmann A."/>
            <person name="Gasson M.J."/>
            <person name="Kuipers O.P."/>
            <person name="van Sinderen D."/>
            <person name="Kok J."/>
        </authorList>
    </citation>
    <scope>NUCLEOTIDE SEQUENCE [LARGE SCALE GENOMIC DNA]</scope>
    <source>
        <strain>MG1363</strain>
    </source>
</reference>
<comment type="function">
    <text evidence="1">Cell division protein that is part of the divisome complex and is recruited early to the Z-ring. Probably stimulates Z-ring formation, perhaps through the cross-linking of FtsZ protofilaments. Its function overlaps with FtsA.</text>
</comment>
<comment type="subunit">
    <text evidence="1">Homodimer. Interacts with FtsZ.</text>
</comment>
<comment type="subcellular location">
    <subcellularLocation>
        <location evidence="1">Cytoplasm</location>
    </subcellularLocation>
    <text evidence="1">Localizes to the division site, in a FtsZ-dependent manner.</text>
</comment>
<comment type="similarity">
    <text evidence="1">Belongs to the SepF family.</text>
</comment>